<accession>Q8TMG9</accession>
<proteinExistence type="inferred from homology"/>
<evidence type="ECO:0000255" key="1">
    <source>
        <dbReference type="HAMAP-Rule" id="MF_01904"/>
    </source>
</evidence>
<evidence type="ECO:0000305" key="2"/>
<organism>
    <name type="scientific">Methanosarcina acetivorans (strain ATCC 35395 / DSM 2834 / JCM 12185 / C2A)</name>
    <dbReference type="NCBI Taxonomy" id="188937"/>
    <lineage>
        <taxon>Archaea</taxon>
        <taxon>Methanobacteriati</taxon>
        <taxon>Methanobacteriota</taxon>
        <taxon>Stenosarchaea group</taxon>
        <taxon>Methanomicrobia</taxon>
        <taxon>Methanosarcinales</taxon>
        <taxon>Methanosarcinaceae</taxon>
        <taxon>Methanosarcina</taxon>
    </lineage>
</organism>
<protein>
    <recommendedName>
        <fullName evidence="1">Phosphoenolpyruvate carboxylase</fullName>
        <shortName evidence="1">PEPC</shortName>
        <shortName evidence="1">PEPCase</shortName>
        <ecNumber evidence="1">4.1.1.31</ecNumber>
    </recommendedName>
</protein>
<feature type="chain" id="PRO_0000309602" description="Phosphoenolpyruvate carboxylase">
    <location>
        <begin position="1"/>
        <end position="526"/>
    </location>
</feature>
<reference key="1">
    <citation type="journal article" date="2002" name="Genome Res.">
        <title>The genome of Methanosarcina acetivorans reveals extensive metabolic and physiological diversity.</title>
        <authorList>
            <person name="Galagan J.E."/>
            <person name="Nusbaum C."/>
            <person name="Roy A."/>
            <person name="Endrizzi M.G."/>
            <person name="Macdonald P."/>
            <person name="FitzHugh W."/>
            <person name="Calvo S."/>
            <person name="Engels R."/>
            <person name="Smirnov S."/>
            <person name="Atnoor D."/>
            <person name="Brown A."/>
            <person name="Allen N."/>
            <person name="Naylor J."/>
            <person name="Stange-Thomann N."/>
            <person name="DeArellano K."/>
            <person name="Johnson R."/>
            <person name="Linton L."/>
            <person name="McEwan P."/>
            <person name="McKernan K."/>
            <person name="Talamas J."/>
            <person name="Tirrell A."/>
            <person name="Ye W."/>
            <person name="Zimmer A."/>
            <person name="Barber R.D."/>
            <person name="Cann I."/>
            <person name="Graham D.E."/>
            <person name="Grahame D.A."/>
            <person name="Guss A.M."/>
            <person name="Hedderich R."/>
            <person name="Ingram-Smith C."/>
            <person name="Kuettner H.C."/>
            <person name="Krzycki J.A."/>
            <person name="Leigh J.A."/>
            <person name="Li W."/>
            <person name="Liu J."/>
            <person name="Mukhopadhyay B."/>
            <person name="Reeve J.N."/>
            <person name="Smith K."/>
            <person name="Springer T.A."/>
            <person name="Umayam L.A."/>
            <person name="White O."/>
            <person name="White R.H."/>
            <person name="de Macario E.C."/>
            <person name="Ferry J.G."/>
            <person name="Jarrell K.F."/>
            <person name="Jing H."/>
            <person name="Macario A.J.L."/>
            <person name="Paulsen I.T."/>
            <person name="Pritchett M."/>
            <person name="Sowers K.R."/>
            <person name="Swanson R.V."/>
            <person name="Zinder S.H."/>
            <person name="Lander E."/>
            <person name="Metcalf W.W."/>
            <person name="Birren B."/>
        </authorList>
    </citation>
    <scope>NUCLEOTIDE SEQUENCE [LARGE SCALE GENOMIC DNA]</scope>
    <source>
        <strain>ATCC 35395 / DSM 2834 / JCM 12185 / C2A</strain>
    </source>
</reference>
<keyword id="KW-0120">Carbon dioxide fixation</keyword>
<keyword id="KW-0456">Lyase</keyword>
<keyword id="KW-0460">Magnesium</keyword>
<keyword id="KW-1185">Reference proteome</keyword>
<gene>
    <name evidence="1" type="primary">ppcA</name>
    <name type="ordered locus">MA_2690</name>
</gene>
<sequence length="526" mass="58335">MSRKSTYPKVMCTQHPDSASRYISTQEEPGEAIEAAVVFGCDEYMPDYEGKATPYHQNVQIVSRLIEETDLVPGKDVFITPRAPSAVQENRFRQLMVMMSIAEANHGALEYSDVQAINEFVHPMTGTVREILDAQQHMVDVSELAKKEFGFAMEVPRIIPLIEDAPALLHAKELTENTLLAWKERFGTVPEKFRVFLGKSDSALSFGHVASTLSCKYAINGLSELNFELETETGIVFGAGTLPFRGHLDLKNAENFFREYRGIGTITLQSALRYSHEKGDAEALVDLAKEKLPEIPELFSAEEKEELVNLIGIFGTRYSLIIRELASTINRLSDLLPQQRDRLMHRGSGGYSRSAPDISGIVSLCRTDIGKELLASMPAEDLHLPRAIKFTGALYSIGLPPEFIGTGAALNEAREKLGDEACERLLTKYFPSLVSDLNFATGYLDLNVASRFLSGACFKEVSKDIEILHETLGLETHPEPSYRILLEMMQPELLQAGTSGNCMDEEVSQLVCSTLTKMGKIRKALG</sequence>
<dbReference type="EC" id="4.1.1.31" evidence="1"/>
<dbReference type="EMBL" id="AE010299">
    <property type="protein sequence ID" value="AAM06068.1"/>
    <property type="status" value="ALT_INIT"/>
    <property type="molecule type" value="Genomic_DNA"/>
</dbReference>
<dbReference type="RefSeq" id="WP_011022649.1">
    <property type="nucleotide sequence ID" value="NC_003552.1"/>
</dbReference>
<dbReference type="SMR" id="Q8TMG9"/>
<dbReference type="STRING" id="188937.MA_2690"/>
<dbReference type="EnsemblBacteria" id="AAM06068">
    <property type="protein sequence ID" value="AAM06068"/>
    <property type="gene ID" value="MA_2690"/>
</dbReference>
<dbReference type="GeneID" id="1474582"/>
<dbReference type="KEGG" id="mac:MA_2690"/>
<dbReference type="HOGENOM" id="CLU_517433_0_0_2"/>
<dbReference type="InParanoid" id="Q8TMG9"/>
<dbReference type="OrthoDB" id="85849at2157"/>
<dbReference type="PhylomeDB" id="Q8TMG9"/>
<dbReference type="Proteomes" id="UP000002487">
    <property type="component" value="Chromosome"/>
</dbReference>
<dbReference type="GO" id="GO:0000287">
    <property type="term" value="F:magnesium ion binding"/>
    <property type="evidence" value="ECO:0007669"/>
    <property type="project" value="UniProtKB-UniRule"/>
</dbReference>
<dbReference type="GO" id="GO:0008964">
    <property type="term" value="F:phosphoenolpyruvate carboxylase activity"/>
    <property type="evidence" value="ECO:0007669"/>
    <property type="project" value="UniProtKB-UniRule"/>
</dbReference>
<dbReference type="GO" id="GO:0015977">
    <property type="term" value="P:carbon fixation"/>
    <property type="evidence" value="ECO:0007669"/>
    <property type="project" value="UniProtKB-UniRule"/>
</dbReference>
<dbReference type="GO" id="GO:0006107">
    <property type="term" value="P:oxaloacetate metabolic process"/>
    <property type="evidence" value="ECO:0007669"/>
    <property type="project" value="UniProtKB-UniRule"/>
</dbReference>
<dbReference type="GO" id="GO:0006099">
    <property type="term" value="P:tricarboxylic acid cycle"/>
    <property type="evidence" value="ECO:0007669"/>
    <property type="project" value="InterPro"/>
</dbReference>
<dbReference type="HAMAP" id="MF_01904">
    <property type="entry name" value="PEPcase_type2"/>
    <property type="match status" value="1"/>
</dbReference>
<dbReference type="InterPro" id="IPR007566">
    <property type="entry name" value="PEP_COase_arc-type"/>
</dbReference>
<dbReference type="InterPro" id="IPR015813">
    <property type="entry name" value="Pyrv/PenolPyrv_kinase-like_dom"/>
</dbReference>
<dbReference type="NCBIfam" id="TIGR02751">
    <property type="entry name" value="PEPCase_arch"/>
    <property type="match status" value="1"/>
</dbReference>
<dbReference type="Pfam" id="PF14010">
    <property type="entry name" value="PEPcase_2"/>
    <property type="match status" value="1"/>
</dbReference>
<dbReference type="PIRSF" id="PIRSF006677">
    <property type="entry name" value="UCP006677"/>
    <property type="match status" value="1"/>
</dbReference>
<dbReference type="SUPFAM" id="SSF51621">
    <property type="entry name" value="Phosphoenolpyruvate/pyruvate domain"/>
    <property type="match status" value="1"/>
</dbReference>
<name>CAPPA_METAC</name>
<comment type="function">
    <text evidence="1">Catalyzes the irreversible beta-carboxylation of phosphoenolpyruvate (PEP) to form oxaloacetate (OAA), a four-carbon dicarboxylic acid source for the tricarboxylic acid cycle.</text>
</comment>
<comment type="catalytic activity">
    <reaction evidence="1">
        <text>oxaloacetate + phosphate = phosphoenolpyruvate + hydrogencarbonate</text>
        <dbReference type="Rhea" id="RHEA:28370"/>
        <dbReference type="ChEBI" id="CHEBI:16452"/>
        <dbReference type="ChEBI" id="CHEBI:17544"/>
        <dbReference type="ChEBI" id="CHEBI:43474"/>
        <dbReference type="ChEBI" id="CHEBI:58702"/>
        <dbReference type="EC" id="4.1.1.31"/>
    </reaction>
</comment>
<comment type="cofactor">
    <cofactor evidence="1">
        <name>Mg(2+)</name>
        <dbReference type="ChEBI" id="CHEBI:18420"/>
    </cofactor>
</comment>
<comment type="subunit">
    <text evidence="1">Homotetramer.</text>
</comment>
<comment type="similarity">
    <text evidence="1">Belongs to the PEPCase type 2 family.</text>
</comment>
<comment type="sequence caution" evidence="2">
    <conflict type="erroneous initiation">
        <sequence resource="EMBL-CDS" id="AAM06068"/>
    </conflict>
</comment>